<name>TPIS_STAA1</name>
<gene>
    <name evidence="1" type="primary">tpiA</name>
    <name type="ordered locus">SAHV_0771</name>
</gene>
<comment type="function">
    <text evidence="1">Involved in the gluconeogenesis. Catalyzes stereospecifically the conversion of dihydroxyacetone phosphate (DHAP) to D-glyceraldehyde-3-phosphate (G3P).</text>
</comment>
<comment type="catalytic activity">
    <reaction evidence="1">
        <text>D-glyceraldehyde 3-phosphate = dihydroxyacetone phosphate</text>
        <dbReference type="Rhea" id="RHEA:18585"/>
        <dbReference type="ChEBI" id="CHEBI:57642"/>
        <dbReference type="ChEBI" id="CHEBI:59776"/>
        <dbReference type="EC" id="5.3.1.1"/>
    </reaction>
</comment>
<comment type="pathway">
    <text evidence="1">Carbohydrate biosynthesis; gluconeogenesis.</text>
</comment>
<comment type="pathway">
    <text evidence="1">Carbohydrate degradation; glycolysis; D-glyceraldehyde 3-phosphate from glycerone phosphate: step 1/1.</text>
</comment>
<comment type="subunit">
    <text evidence="1">Homodimer.</text>
</comment>
<comment type="subcellular location">
    <subcellularLocation>
        <location evidence="1">Cytoplasm</location>
    </subcellularLocation>
</comment>
<comment type="similarity">
    <text evidence="1">Belongs to the triosephosphate isomerase family.</text>
</comment>
<sequence>MRTPIIAGNWKMNKTVQEAKDFVNALPTLPDSKEVESVICAPAIQLDALTTAVKEGKAQGLEIGAQNTYFEDNGAFTGETSPVALADLGVKYVVIGHSERRELFHETDEEINKKAHAIFKHGMTPIICVGETDEERESGKANDVVGEQVKKAVAGLSEDQLKSVVIAYEPIWAIGTGKSSTSEDANEMCAFVRQTIADLSSKEVSEATRIQYGGSVKPNNIKEYMAQTDIDGALVGGASLKVEDFVQLLEGAK</sequence>
<accession>A7WZS8</accession>
<dbReference type="EC" id="5.3.1.1" evidence="1"/>
<dbReference type="EMBL" id="AP009324">
    <property type="protein sequence ID" value="BAF77654.1"/>
    <property type="molecule type" value="Genomic_DNA"/>
</dbReference>
<dbReference type="RefSeq" id="WP_001260089.1">
    <property type="nucleotide sequence ID" value="NZ_CTYB01000039.1"/>
</dbReference>
<dbReference type="SMR" id="A7WZS8"/>
<dbReference type="KEGG" id="saw:SAHV_0771"/>
<dbReference type="HOGENOM" id="CLU_024251_2_3_9"/>
<dbReference type="UniPathway" id="UPA00109">
    <property type="reaction ID" value="UER00189"/>
</dbReference>
<dbReference type="UniPathway" id="UPA00138"/>
<dbReference type="GO" id="GO:0005829">
    <property type="term" value="C:cytosol"/>
    <property type="evidence" value="ECO:0007669"/>
    <property type="project" value="TreeGrafter"/>
</dbReference>
<dbReference type="GO" id="GO:0004807">
    <property type="term" value="F:triose-phosphate isomerase activity"/>
    <property type="evidence" value="ECO:0007669"/>
    <property type="project" value="UniProtKB-UniRule"/>
</dbReference>
<dbReference type="GO" id="GO:0006094">
    <property type="term" value="P:gluconeogenesis"/>
    <property type="evidence" value="ECO:0007669"/>
    <property type="project" value="UniProtKB-UniRule"/>
</dbReference>
<dbReference type="GO" id="GO:0046166">
    <property type="term" value="P:glyceraldehyde-3-phosphate biosynthetic process"/>
    <property type="evidence" value="ECO:0007669"/>
    <property type="project" value="TreeGrafter"/>
</dbReference>
<dbReference type="GO" id="GO:0019563">
    <property type="term" value="P:glycerol catabolic process"/>
    <property type="evidence" value="ECO:0007669"/>
    <property type="project" value="TreeGrafter"/>
</dbReference>
<dbReference type="GO" id="GO:0006096">
    <property type="term" value="P:glycolytic process"/>
    <property type="evidence" value="ECO:0007669"/>
    <property type="project" value="UniProtKB-UniRule"/>
</dbReference>
<dbReference type="CDD" id="cd00311">
    <property type="entry name" value="TIM"/>
    <property type="match status" value="1"/>
</dbReference>
<dbReference type="FunFam" id="3.20.20.70:FF:000016">
    <property type="entry name" value="Triosephosphate isomerase"/>
    <property type="match status" value="1"/>
</dbReference>
<dbReference type="Gene3D" id="3.20.20.70">
    <property type="entry name" value="Aldolase class I"/>
    <property type="match status" value="1"/>
</dbReference>
<dbReference type="HAMAP" id="MF_00147_B">
    <property type="entry name" value="TIM_B"/>
    <property type="match status" value="1"/>
</dbReference>
<dbReference type="InterPro" id="IPR013785">
    <property type="entry name" value="Aldolase_TIM"/>
</dbReference>
<dbReference type="InterPro" id="IPR035990">
    <property type="entry name" value="TIM_sf"/>
</dbReference>
<dbReference type="InterPro" id="IPR022896">
    <property type="entry name" value="TrioseP_Isoase_bac/euk"/>
</dbReference>
<dbReference type="InterPro" id="IPR000652">
    <property type="entry name" value="Triosephosphate_isomerase"/>
</dbReference>
<dbReference type="InterPro" id="IPR020861">
    <property type="entry name" value="Triosephosphate_isomerase_AS"/>
</dbReference>
<dbReference type="NCBIfam" id="TIGR00419">
    <property type="entry name" value="tim"/>
    <property type="match status" value="1"/>
</dbReference>
<dbReference type="PANTHER" id="PTHR21139">
    <property type="entry name" value="TRIOSEPHOSPHATE ISOMERASE"/>
    <property type="match status" value="1"/>
</dbReference>
<dbReference type="PANTHER" id="PTHR21139:SF42">
    <property type="entry name" value="TRIOSEPHOSPHATE ISOMERASE"/>
    <property type="match status" value="1"/>
</dbReference>
<dbReference type="Pfam" id="PF00121">
    <property type="entry name" value="TIM"/>
    <property type="match status" value="1"/>
</dbReference>
<dbReference type="SUPFAM" id="SSF51351">
    <property type="entry name" value="Triosephosphate isomerase (TIM)"/>
    <property type="match status" value="1"/>
</dbReference>
<dbReference type="PROSITE" id="PS00171">
    <property type="entry name" value="TIM_1"/>
    <property type="match status" value="1"/>
</dbReference>
<dbReference type="PROSITE" id="PS51440">
    <property type="entry name" value="TIM_2"/>
    <property type="match status" value="1"/>
</dbReference>
<reference key="1">
    <citation type="journal article" date="2008" name="Antimicrob. Agents Chemother.">
        <title>Mutated response regulator graR is responsible for phenotypic conversion of Staphylococcus aureus from heterogeneous vancomycin-intermediate resistance to vancomycin-intermediate resistance.</title>
        <authorList>
            <person name="Neoh H.-M."/>
            <person name="Cui L."/>
            <person name="Yuzawa H."/>
            <person name="Takeuchi F."/>
            <person name="Matsuo M."/>
            <person name="Hiramatsu K."/>
        </authorList>
    </citation>
    <scope>NUCLEOTIDE SEQUENCE [LARGE SCALE GENOMIC DNA]</scope>
    <source>
        <strain>Mu3 / ATCC 700698</strain>
    </source>
</reference>
<keyword id="KW-0963">Cytoplasm</keyword>
<keyword id="KW-0312">Gluconeogenesis</keyword>
<keyword id="KW-0324">Glycolysis</keyword>
<keyword id="KW-0413">Isomerase</keyword>
<organism>
    <name type="scientific">Staphylococcus aureus (strain Mu3 / ATCC 700698)</name>
    <dbReference type="NCBI Taxonomy" id="418127"/>
    <lineage>
        <taxon>Bacteria</taxon>
        <taxon>Bacillati</taxon>
        <taxon>Bacillota</taxon>
        <taxon>Bacilli</taxon>
        <taxon>Bacillales</taxon>
        <taxon>Staphylococcaceae</taxon>
        <taxon>Staphylococcus</taxon>
    </lineage>
</organism>
<protein>
    <recommendedName>
        <fullName evidence="1">Triosephosphate isomerase</fullName>
        <shortName evidence="1">TIM</shortName>
        <shortName evidence="1">TPI</shortName>
        <ecNumber evidence="1">5.3.1.1</ecNumber>
    </recommendedName>
    <alternativeName>
        <fullName evidence="1">Triose-phosphate isomerase</fullName>
    </alternativeName>
</protein>
<evidence type="ECO:0000255" key="1">
    <source>
        <dbReference type="HAMAP-Rule" id="MF_00147"/>
    </source>
</evidence>
<feature type="chain" id="PRO_1000009858" description="Triosephosphate isomerase">
    <location>
        <begin position="1"/>
        <end position="253"/>
    </location>
</feature>
<feature type="active site" description="Electrophile" evidence="1">
    <location>
        <position position="97"/>
    </location>
</feature>
<feature type="active site" description="Proton acceptor" evidence="1">
    <location>
        <position position="169"/>
    </location>
</feature>
<feature type="binding site" evidence="1">
    <location>
        <begin position="9"/>
        <end position="11"/>
    </location>
    <ligand>
        <name>substrate</name>
    </ligand>
</feature>
<feature type="binding site" evidence="1">
    <location>
        <position position="175"/>
    </location>
    <ligand>
        <name>substrate</name>
    </ligand>
</feature>
<feature type="binding site" evidence="1">
    <location>
        <position position="215"/>
    </location>
    <ligand>
        <name>substrate</name>
    </ligand>
</feature>
<feature type="binding site" evidence="1">
    <location>
        <begin position="236"/>
        <end position="237"/>
    </location>
    <ligand>
        <name>substrate</name>
    </ligand>
</feature>
<proteinExistence type="inferred from homology"/>